<organism>
    <name type="scientific">Schizosaccharomyces pombe (strain 972 / ATCC 24843)</name>
    <name type="common">Fission yeast</name>
    <dbReference type="NCBI Taxonomy" id="284812"/>
    <lineage>
        <taxon>Eukaryota</taxon>
        <taxon>Fungi</taxon>
        <taxon>Dikarya</taxon>
        <taxon>Ascomycota</taxon>
        <taxon>Taphrinomycotina</taxon>
        <taxon>Schizosaccharomycetes</taxon>
        <taxon>Schizosaccharomycetales</taxon>
        <taxon>Schizosaccharomycetaceae</taxon>
        <taxon>Schizosaccharomyces</taxon>
    </lineage>
</organism>
<reference key="1">
    <citation type="journal article" date="1996" name="EMBO J.">
        <title>The fission yeast dma1 gene is a component of the spindle assembly checkpoint, required to prevent septum formation and premature exit from mitosis if spindle function is compromised.</title>
        <authorList>
            <person name="Murone M."/>
            <person name="Simanis V."/>
        </authorList>
    </citation>
    <scope>NUCLEOTIDE SEQUENCE [GENOMIC DNA]</scope>
    <scope>FUNCTION</scope>
    <source>
        <strain>972 / ATCC 24843</strain>
    </source>
</reference>
<reference key="2">
    <citation type="journal article" date="2002" name="Nature">
        <title>The genome sequence of Schizosaccharomyces pombe.</title>
        <authorList>
            <person name="Wood V."/>
            <person name="Gwilliam R."/>
            <person name="Rajandream M.A."/>
            <person name="Lyne M.H."/>
            <person name="Lyne R."/>
            <person name="Stewart A."/>
            <person name="Sgouros J.G."/>
            <person name="Peat N."/>
            <person name="Hayles J."/>
            <person name="Baker S.G."/>
            <person name="Basham D."/>
            <person name="Bowman S."/>
            <person name="Brooks K."/>
            <person name="Brown D."/>
            <person name="Brown S."/>
            <person name="Chillingworth T."/>
            <person name="Churcher C.M."/>
            <person name="Collins M."/>
            <person name="Connor R."/>
            <person name="Cronin A."/>
            <person name="Davis P."/>
            <person name="Feltwell T."/>
            <person name="Fraser A."/>
            <person name="Gentles S."/>
            <person name="Goble A."/>
            <person name="Hamlin N."/>
            <person name="Harris D.E."/>
            <person name="Hidalgo J."/>
            <person name="Hodgson G."/>
            <person name="Holroyd S."/>
            <person name="Hornsby T."/>
            <person name="Howarth S."/>
            <person name="Huckle E.J."/>
            <person name="Hunt S."/>
            <person name="Jagels K."/>
            <person name="James K.D."/>
            <person name="Jones L."/>
            <person name="Jones M."/>
            <person name="Leather S."/>
            <person name="McDonald S."/>
            <person name="McLean J."/>
            <person name="Mooney P."/>
            <person name="Moule S."/>
            <person name="Mungall K.L."/>
            <person name="Murphy L.D."/>
            <person name="Niblett D."/>
            <person name="Odell C."/>
            <person name="Oliver K."/>
            <person name="O'Neil S."/>
            <person name="Pearson D."/>
            <person name="Quail M.A."/>
            <person name="Rabbinowitsch E."/>
            <person name="Rutherford K.M."/>
            <person name="Rutter S."/>
            <person name="Saunders D."/>
            <person name="Seeger K."/>
            <person name="Sharp S."/>
            <person name="Skelton J."/>
            <person name="Simmonds M.N."/>
            <person name="Squares R."/>
            <person name="Squares S."/>
            <person name="Stevens K."/>
            <person name="Taylor K."/>
            <person name="Taylor R.G."/>
            <person name="Tivey A."/>
            <person name="Walsh S.V."/>
            <person name="Warren T."/>
            <person name="Whitehead S."/>
            <person name="Woodward J.R."/>
            <person name="Volckaert G."/>
            <person name="Aert R."/>
            <person name="Robben J."/>
            <person name="Grymonprez B."/>
            <person name="Weltjens I."/>
            <person name="Vanstreels E."/>
            <person name="Rieger M."/>
            <person name="Schaefer M."/>
            <person name="Mueller-Auer S."/>
            <person name="Gabel C."/>
            <person name="Fuchs M."/>
            <person name="Duesterhoeft A."/>
            <person name="Fritzc C."/>
            <person name="Holzer E."/>
            <person name="Moestl D."/>
            <person name="Hilbert H."/>
            <person name="Borzym K."/>
            <person name="Langer I."/>
            <person name="Beck A."/>
            <person name="Lehrach H."/>
            <person name="Reinhardt R."/>
            <person name="Pohl T.M."/>
            <person name="Eger P."/>
            <person name="Zimmermann W."/>
            <person name="Wedler H."/>
            <person name="Wambutt R."/>
            <person name="Purnelle B."/>
            <person name="Goffeau A."/>
            <person name="Cadieu E."/>
            <person name="Dreano S."/>
            <person name="Gloux S."/>
            <person name="Lelaure V."/>
            <person name="Mottier S."/>
            <person name="Galibert F."/>
            <person name="Aves S.J."/>
            <person name="Xiang Z."/>
            <person name="Hunt C."/>
            <person name="Moore K."/>
            <person name="Hurst S.M."/>
            <person name="Lucas M."/>
            <person name="Rochet M."/>
            <person name="Gaillardin C."/>
            <person name="Tallada V.A."/>
            <person name="Garzon A."/>
            <person name="Thode G."/>
            <person name="Daga R.R."/>
            <person name="Cruzado L."/>
            <person name="Jimenez J."/>
            <person name="Sanchez M."/>
            <person name="del Rey F."/>
            <person name="Benito J."/>
            <person name="Dominguez A."/>
            <person name="Revuelta J.L."/>
            <person name="Moreno S."/>
            <person name="Armstrong J."/>
            <person name="Forsburg S.L."/>
            <person name="Cerutti L."/>
            <person name="Lowe T."/>
            <person name="McCombie W.R."/>
            <person name="Paulsen I."/>
            <person name="Potashkin J."/>
            <person name="Shpakovski G.V."/>
            <person name="Ussery D."/>
            <person name="Barrell B.G."/>
            <person name="Nurse P."/>
        </authorList>
    </citation>
    <scope>NUCLEOTIDE SEQUENCE [LARGE SCALE GENOMIC DNA]</scope>
    <source>
        <strain>972 / ATCC 24843</strain>
    </source>
</reference>
<reference key="3">
    <citation type="journal article" date="2002" name="Dev. Cell">
        <title>Dma1 prevents mitotic exit and cytokinesis by inhibiting the septation initiation network (SIN).</title>
        <authorList>
            <person name="Guertin D.A."/>
            <person name="Venkatram S."/>
            <person name="Gould K.L."/>
            <person name="McCollum D."/>
        </authorList>
    </citation>
    <scope>FUNCTION</scope>
    <scope>INTERACTION WITH SID4</scope>
    <scope>SUBCELLULAR LOCATION</scope>
    <scope>DOMAIN</scope>
    <scope>MUTAGENESIS OF ARG-64; HIS-88; CYS-210 AND HIS-212</scope>
</reference>
<reference key="4">
    <citation type="journal article" date="2004" name="Curr. Biol.">
        <title>Sid4p-Cdc11p assembles the septation initiation network and its regulators at the S. pombe SPB.</title>
        <authorList>
            <person name="Morrell J.L."/>
            <person name="Tomlin G.C."/>
            <person name="Rajagopalan S."/>
            <person name="Venkatram S."/>
            <person name="Feoktistova A.S."/>
            <person name="Tasto J.J."/>
            <person name="Mehta S."/>
            <person name="Jennings J.L."/>
            <person name="Link A."/>
            <person name="Balasubramanian M.K."/>
            <person name="Gould K.L."/>
        </authorList>
    </citation>
    <scope>INTERACTION WITH SID4</scope>
</reference>
<reference key="5">
    <citation type="journal article" date="2006" name="Nat. Biotechnol.">
        <title>ORFeome cloning and global analysis of protein localization in the fission yeast Schizosaccharomyces pombe.</title>
        <authorList>
            <person name="Matsuyama A."/>
            <person name="Arai R."/>
            <person name="Yashiroda Y."/>
            <person name="Shirai A."/>
            <person name="Kamata A."/>
            <person name="Sekido S."/>
            <person name="Kobayashi Y."/>
            <person name="Hashimoto A."/>
            <person name="Hamamoto M."/>
            <person name="Hiraoka Y."/>
            <person name="Horinouchi S."/>
            <person name="Yoshida M."/>
        </authorList>
    </citation>
    <scope>SUBCELLULAR LOCATION [LARGE SCALE ANALYSIS]</scope>
</reference>
<keyword id="KW-0131">Cell cycle</keyword>
<keyword id="KW-0963">Cytoplasm</keyword>
<keyword id="KW-0206">Cytoskeleton</keyword>
<keyword id="KW-0479">Metal-binding</keyword>
<keyword id="KW-1185">Reference proteome</keyword>
<keyword id="KW-0808">Transferase</keyword>
<keyword id="KW-0833">Ubl conjugation pathway</keyword>
<keyword id="KW-0862">Zinc</keyword>
<keyword id="KW-0863">Zinc-finger</keyword>
<comment type="function">
    <text evidence="4 7">Probable E3 ubiquitin-protein ligase which is a component of the spindle assembly checkpoint, required to prevent septum formation and premature exit from mitosis if spindle function is compromised. Inhibits the septation initiation netwok (SIN) during spindle checkpoint activation. The effect appears to be mediated through preventing the SIN activator, plo1 kinase, from localizing to the SPB.</text>
</comment>
<comment type="catalytic activity">
    <reaction evidence="1">
        <text>S-ubiquitinyl-[E2 ubiquitin-conjugating enzyme]-L-cysteine + [acceptor protein]-L-lysine = [E2 ubiquitin-conjugating enzyme]-L-cysteine + N(6)-ubiquitinyl-[acceptor protein]-L-lysine.</text>
        <dbReference type="EC" id="2.3.2.27"/>
    </reaction>
</comment>
<comment type="subunit">
    <text evidence="4 5">Interacts with sid4.</text>
</comment>
<comment type="interaction">
    <interactant intactId="EBI-1125055">
        <id>Q10322</id>
    </interactant>
    <interactant intactId="EBI-1125100">
        <id>O60187</id>
        <label>sid4</label>
    </interactant>
    <organismsDiffer>false</organismsDiffer>
    <experiments>2</experiments>
</comment>
<comment type="subcellular location">
    <subcellularLocation>
        <location evidence="4 6">Cytoplasm</location>
        <location evidence="4 6">Cytoskeleton</location>
        <location evidence="4 6">Microtubule organizing center</location>
        <location evidence="4 6">Spindle pole body</location>
    </subcellularLocation>
    <text>Also localizes at the division site in mitosis.</text>
</comment>
<comment type="domain">
    <text evidence="4">The FHA domain is required for the proper localization at the SPB.</text>
</comment>
<comment type="similarity">
    <text evidence="8">Belongs to the DMA1 family.</text>
</comment>
<dbReference type="EC" id="2.3.2.27" evidence="1"/>
<dbReference type="EMBL" id="X81883">
    <property type="protein sequence ID" value="CAA57466.1"/>
    <property type="molecule type" value="Genomic_DNA"/>
</dbReference>
<dbReference type="EMBL" id="CU329670">
    <property type="protein sequence ID" value="CAA93693.1"/>
    <property type="molecule type" value="Genomic_DNA"/>
</dbReference>
<dbReference type="PIR" id="T37862">
    <property type="entry name" value="T37862"/>
</dbReference>
<dbReference type="RefSeq" id="NP_593733.1">
    <property type="nucleotide sequence ID" value="NM_001019164.2"/>
</dbReference>
<dbReference type="SMR" id="Q10322"/>
<dbReference type="BioGRID" id="278873">
    <property type="interactions" value="53"/>
</dbReference>
<dbReference type="FunCoup" id="Q10322">
    <property type="interactions" value="12"/>
</dbReference>
<dbReference type="IntAct" id="Q10322">
    <property type="interactions" value="10"/>
</dbReference>
<dbReference type="STRING" id="284812.Q10322"/>
<dbReference type="iPTMnet" id="Q10322"/>
<dbReference type="PaxDb" id="4896-SPAC17G8.10c.1"/>
<dbReference type="EnsemblFungi" id="SPAC17G8.10c.1">
    <property type="protein sequence ID" value="SPAC17G8.10c.1:pep"/>
    <property type="gene ID" value="SPAC17G8.10c"/>
</dbReference>
<dbReference type="GeneID" id="2542409"/>
<dbReference type="KEGG" id="spo:2542409"/>
<dbReference type="PomBase" id="SPAC17G8.10c">
    <property type="gene designation" value="dma1"/>
</dbReference>
<dbReference type="VEuPathDB" id="FungiDB:SPAC17G8.10c"/>
<dbReference type="eggNOG" id="KOG3872">
    <property type="taxonomic scope" value="Eukaryota"/>
</dbReference>
<dbReference type="HOGENOM" id="CLU_026302_0_0_1"/>
<dbReference type="InParanoid" id="Q10322"/>
<dbReference type="OMA" id="FICRKYH"/>
<dbReference type="PhylomeDB" id="Q10322"/>
<dbReference type="Reactome" id="R-SPO-5693565">
    <property type="pathway name" value="Recruitment and ATM-mediated phosphorylation of repair and signaling proteins at DNA double strand breaks"/>
</dbReference>
<dbReference type="CD-CODE" id="576F0A76">
    <property type="entry name" value="Centrosome"/>
</dbReference>
<dbReference type="PRO" id="PR:Q10322"/>
<dbReference type="Proteomes" id="UP000002485">
    <property type="component" value="Chromosome I"/>
</dbReference>
<dbReference type="GO" id="GO:1902716">
    <property type="term" value="C:cell cortex of growing cell tip"/>
    <property type="evidence" value="ECO:0000314"/>
    <property type="project" value="PomBase"/>
</dbReference>
<dbReference type="GO" id="GO:0032153">
    <property type="term" value="C:cell division site"/>
    <property type="evidence" value="ECO:0000314"/>
    <property type="project" value="PomBase"/>
</dbReference>
<dbReference type="GO" id="GO:0051286">
    <property type="term" value="C:cell tip"/>
    <property type="evidence" value="ECO:0000314"/>
    <property type="project" value="PomBase"/>
</dbReference>
<dbReference type="GO" id="GO:0005829">
    <property type="term" value="C:cytosol"/>
    <property type="evidence" value="ECO:0007005"/>
    <property type="project" value="PomBase"/>
</dbReference>
<dbReference type="GO" id="GO:0000935">
    <property type="term" value="C:division septum"/>
    <property type="evidence" value="ECO:0000269"/>
    <property type="project" value="PomBase"/>
</dbReference>
<dbReference type="GO" id="GO:0043332">
    <property type="term" value="C:mating projection tip"/>
    <property type="evidence" value="ECO:0000314"/>
    <property type="project" value="PomBase"/>
</dbReference>
<dbReference type="GO" id="GO:0071341">
    <property type="term" value="C:medial cortical node"/>
    <property type="evidence" value="ECO:0000314"/>
    <property type="project" value="PomBase"/>
</dbReference>
<dbReference type="GO" id="GO:0035974">
    <property type="term" value="C:meiotic spindle pole body"/>
    <property type="evidence" value="ECO:0000314"/>
    <property type="project" value="PomBase"/>
</dbReference>
<dbReference type="GO" id="GO:0110085">
    <property type="term" value="C:mitotic actomyosin contractile ring"/>
    <property type="evidence" value="ECO:0000269"/>
    <property type="project" value="PomBase"/>
</dbReference>
<dbReference type="GO" id="GO:0044732">
    <property type="term" value="C:mitotic spindle pole body"/>
    <property type="evidence" value="ECO:0000314"/>
    <property type="project" value="PomBase"/>
</dbReference>
<dbReference type="GO" id="GO:0005628">
    <property type="term" value="C:prospore membrane"/>
    <property type="evidence" value="ECO:0000314"/>
    <property type="project" value="PomBase"/>
</dbReference>
<dbReference type="GO" id="GO:0005816">
    <property type="term" value="C:spindle pole body"/>
    <property type="evidence" value="ECO:0000269"/>
    <property type="project" value="PomBase"/>
</dbReference>
<dbReference type="GO" id="GO:0061630">
    <property type="term" value="F:ubiquitin protein ligase activity"/>
    <property type="evidence" value="ECO:0000314"/>
    <property type="project" value="PomBase"/>
</dbReference>
<dbReference type="GO" id="GO:0008270">
    <property type="term" value="F:zinc ion binding"/>
    <property type="evidence" value="ECO:0000255"/>
    <property type="project" value="PomBase"/>
</dbReference>
<dbReference type="GO" id="GO:1902426">
    <property type="term" value="P:deactivation of mitotic spindle assembly checkpoint"/>
    <property type="evidence" value="ECO:0000315"/>
    <property type="project" value="PomBase"/>
</dbReference>
<dbReference type="GO" id="GO:0006974">
    <property type="term" value="P:DNA damage response"/>
    <property type="evidence" value="ECO:0000315"/>
    <property type="project" value="PomBase"/>
</dbReference>
<dbReference type="GO" id="GO:0007094">
    <property type="term" value="P:mitotic spindle assembly checkpoint signaling"/>
    <property type="evidence" value="ECO:0000315"/>
    <property type="project" value="PomBase"/>
</dbReference>
<dbReference type="GO" id="GO:0051517">
    <property type="term" value="P:negative regulation of bipolar cell growth"/>
    <property type="evidence" value="ECO:0000315"/>
    <property type="project" value="PomBase"/>
</dbReference>
<dbReference type="GO" id="GO:0031030">
    <property type="term" value="P:negative regulation of septation initiation signaling"/>
    <property type="evidence" value="ECO:0000315"/>
    <property type="project" value="PomBase"/>
</dbReference>
<dbReference type="GO" id="GO:1903024">
    <property type="term" value="P:positive regulation of ascospore-type prospore membrane formation"/>
    <property type="evidence" value="ECO:0000315"/>
    <property type="project" value="PomBase"/>
</dbReference>
<dbReference type="GO" id="GO:0043938">
    <property type="term" value="P:positive regulation of sporulation"/>
    <property type="evidence" value="ECO:0000315"/>
    <property type="project" value="PomBase"/>
</dbReference>
<dbReference type="CDD" id="cd22692">
    <property type="entry name" value="FHA_DMA-like"/>
    <property type="match status" value="1"/>
</dbReference>
<dbReference type="FunFam" id="3.30.40.10:FF:000426">
    <property type="entry name" value="DMA1p Ubiquitin-protein ligase (E3)"/>
    <property type="match status" value="1"/>
</dbReference>
<dbReference type="Gene3D" id="2.60.200.20">
    <property type="match status" value="1"/>
</dbReference>
<dbReference type="Gene3D" id="3.30.40.10">
    <property type="entry name" value="Zinc/RING finger domain, C3HC4 (zinc finger)"/>
    <property type="match status" value="1"/>
</dbReference>
<dbReference type="InterPro" id="IPR000253">
    <property type="entry name" value="FHA_dom"/>
</dbReference>
<dbReference type="InterPro" id="IPR008984">
    <property type="entry name" value="SMAD_FHA_dom_sf"/>
</dbReference>
<dbReference type="InterPro" id="IPR001841">
    <property type="entry name" value="Znf_RING"/>
</dbReference>
<dbReference type="InterPro" id="IPR013083">
    <property type="entry name" value="Znf_RING/FYVE/PHD"/>
</dbReference>
<dbReference type="PANTHER" id="PTHR15067:SF7">
    <property type="entry name" value="E3 UBIQUITIN-PROTEIN LIGASE DMA1-RELATED"/>
    <property type="match status" value="1"/>
</dbReference>
<dbReference type="PANTHER" id="PTHR15067">
    <property type="entry name" value="E3 UBIQUITIN-PROTEIN LIGASE RNF8"/>
    <property type="match status" value="1"/>
</dbReference>
<dbReference type="Pfam" id="PF00498">
    <property type="entry name" value="FHA"/>
    <property type="match status" value="1"/>
</dbReference>
<dbReference type="Pfam" id="PF17123">
    <property type="entry name" value="zf-RING_11"/>
    <property type="match status" value="1"/>
</dbReference>
<dbReference type="SMART" id="SM00240">
    <property type="entry name" value="FHA"/>
    <property type="match status" value="1"/>
</dbReference>
<dbReference type="SMART" id="SM00184">
    <property type="entry name" value="RING"/>
    <property type="match status" value="1"/>
</dbReference>
<dbReference type="SUPFAM" id="SSF57850">
    <property type="entry name" value="RING/U-box"/>
    <property type="match status" value="1"/>
</dbReference>
<dbReference type="SUPFAM" id="SSF49879">
    <property type="entry name" value="SMAD/FHA domain"/>
    <property type="match status" value="1"/>
</dbReference>
<dbReference type="PROSITE" id="PS50006">
    <property type="entry name" value="FHA_DOMAIN"/>
    <property type="match status" value="1"/>
</dbReference>
<dbReference type="PROSITE" id="PS50089">
    <property type="entry name" value="ZF_RING_2"/>
    <property type="match status" value="1"/>
</dbReference>
<gene>
    <name type="primary">dma1</name>
    <name type="ORF">SPAC17G8.10c</name>
</gene>
<sequence length="267" mass="30597">MTKSVEGYLKEQELAAETDSEKDDDKISIRLTNFVGPNAHSFSFDPLVRYWNRKQNNLPIYIGRYTERYNGGDVSAIVFRSKVVSRRHAQIFYENNTWYIQDMGSSSGTFLNHVRLSPPSKTSKPYPISNNDILQLGADYRGGHEVNYRCVRARVELNNSWKIKLSPYNLNEFKRMQELVLCGSSESGPPECCICLMPVLPCQALFVAPCSHSYHYKCIRPTLNESHPYFSCFICRKYHDLEAPVEEGDESLNDLLRNATVKDDASE</sequence>
<proteinExistence type="evidence at protein level"/>
<protein>
    <recommendedName>
        <fullName>Probable E3 ubiquitin-protein ligase dma1</fullName>
        <ecNumber evidence="1">2.3.2.27</ecNumber>
    </recommendedName>
    <alternativeName>
        <fullName evidence="8">RING-type E3 ubiquitin transferase dma1</fullName>
    </alternativeName>
</protein>
<accession>Q10322</accession>
<evidence type="ECO:0000250" key="1">
    <source>
        <dbReference type="UniProtKB" id="P38823"/>
    </source>
</evidence>
<evidence type="ECO:0000255" key="2">
    <source>
        <dbReference type="PROSITE-ProRule" id="PRU00086"/>
    </source>
</evidence>
<evidence type="ECO:0000255" key="3">
    <source>
        <dbReference type="PROSITE-ProRule" id="PRU00175"/>
    </source>
</evidence>
<evidence type="ECO:0000269" key="4">
    <source>
    </source>
</evidence>
<evidence type="ECO:0000269" key="5">
    <source>
    </source>
</evidence>
<evidence type="ECO:0000269" key="6">
    <source>
    </source>
</evidence>
<evidence type="ECO:0000269" key="7">
    <source>
    </source>
</evidence>
<evidence type="ECO:0000305" key="8"/>
<name>DMA1_SCHPO</name>
<feature type="chain" id="PRO_0000055897" description="Probable E3 ubiquitin-protein ligase dma1">
    <location>
        <begin position="1"/>
        <end position="267"/>
    </location>
</feature>
<feature type="domain" description="FHA" evidence="2">
    <location>
        <begin position="60"/>
        <end position="116"/>
    </location>
</feature>
<feature type="zinc finger region" description="RING-type" evidence="3">
    <location>
        <begin position="192"/>
        <end position="236"/>
    </location>
</feature>
<feature type="mutagenesis site" description="Impairs dma1 proper localization and ability to maintain spindle checkpoint arrest." evidence="4">
    <original>R</original>
    <variation>A</variation>
    <location>
        <position position="64"/>
    </location>
</feature>
<feature type="mutagenesis site" description="Impairs dma1 proper localization and ability to maintain spindle checkpoint arrest." evidence="4">
    <original>H</original>
    <variation>A</variation>
    <location>
        <position position="88"/>
    </location>
</feature>
<feature type="mutagenesis site" description="Impairs ability to maintain spindle checkpoint arrest; when associated with A-210." evidence="4">
    <original>C</original>
    <variation>A</variation>
    <location>
        <position position="210"/>
    </location>
</feature>
<feature type="mutagenesis site" description="Impairs ability to maintain spindle checkpoint arrest; when associated with A-212." evidence="4">
    <original>H</original>
    <variation>A</variation>
    <location>
        <position position="212"/>
    </location>
</feature>